<proteinExistence type="inferred from homology"/>
<feature type="chain" id="PRO_1000145385" description="Peptide methionine sulfoxide reductase MsrB">
    <location>
        <begin position="1"/>
        <end position="137"/>
    </location>
</feature>
<feature type="domain" description="MsrB" evidence="2">
    <location>
        <begin position="7"/>
        <end position="129"/>
    </location>
</feature>
<feature type="active site" description="Nucleophile" evidence="2">
    <location>
        <position position="118"/>
    </location>
</feature>
<feature type="binding site" evidence="2">
    <location>
        <position position="46"/>
    </location>
    <ligand>
        <name>Zn(2+)</name>
        <dbReference type="ChEBI" id="CHEBI:29105"/>
    </ligand>
</feature>
<feature type="binding site" evidence="2">
    <location>
        <position position="49"/>
    </location>
    <ligand>
        <name>Zn(2+)</name>
        <dbReference type="ChEBI" id="CHEBI:29105"/>
    </ligand>
</feature>
<feature type="binding site" evidence="2">
    <location>
        <position position="95"/>
    </location>
    <ligand>
        <name>Zn(2+)</name>
        <dbReference type="ChEBI" id="CHEBI:29105"/>
    </ligand>
</feature>
<feature type="binding site" evidence="2">
    <location>
        <position position="98"/>
    </location>
    <ligand>
        <name>Zn(2+)</name>
        <dbReference type="ChEBI" id="CHEBI:29105"/>
    </ligand>
</feature>
<dbReference type="EC" id="1.8.4.12" evidence="1"/>
<dbReference type="EMBL" id="CP001048">
    <property type="protein sequence ID" value="ACC89110.1"/>
    <property type="molecule type" value="Genomic_DNA"/>
</dbReference>
<dbReference type="RefSeq" id="WP_002211677.1">
    <property type="nucleotide sequence ID" value="NZ_CP009780.1"/>
</dbReference>
<dbReference type="SMR" id="B2K3R4"/>
<dbReference type="GeneID" id="57976510"/>
<dbReference type="KEGG" id="ypb:YPTS_2147"/>
<dbReference type="PATRIC" id="fig|502801.10.peg.1537"/>
<dbReference type="GO" id="GO:0005737">
    <property type="term" value="C:cytoplasm"/>
    <property type="evidence" value="ECO:0007669"/>
    <property type="project" value="TreeGrafter"/>
</dbReference>
<dbReference type="GO" id="GO:0033743">
    <property type="term" value="F:peptide-methionine (R)-S-oxide reductase activity"/>
    <property type="evidence" value="ECO:0007669"/>
    <property type="project" value="UniProtKB-UniRule"/>
</dbReference>
<dbReference type="GO" id="GO:0008270">
    <property type="term" value="F:zinc ion binding"/>
    <property type="evidence" value="ECO:0007669"/>
    <property type="project" value="UniProtKB-UniRule"/>
</dbReference>
<dbReference type="GO" id="GO:0030091">
    <property type="term" value="P:protein repair"/>
    <property type="evidence" value="ECO:0007669"/>
    <property type="project" value="InterPro"/>
</dbReference>
<dbReference type="GO" id="GO:0006979">
    <property type="term" value="P:response to oxidative stress"/>
    <property type="evidence" value="ECO:0007669"/>
    <property type="project" value="InterPro"/>
</dbReference>
<dbReference type="FunFam" id="2.170.150.20:FF:000001">
    <property type="entry name" value="Peptide methionine sulfoxide reductase MsrB"/>
    <property type="match status" value="1"/>
</dbReference>
<dbReference type="Gene3D" id="2.170.150.20">
    <property type="entry name" value="Peptide methionine sulfoxide reductase"/>
    <property type="match status" value="1"/>
</dbReference>
<dbReference type="HAMAP" id="MF_01400">
    <property type="entry name" value="MsrB"/>
    <property type="match status" value="1"/>
</dbReference>
<dbReference type="InterPro" id="IPR028427">
    <property type="entry name" value="Met_Sox_Rdtase_MsrB"/>
</dbReference>
<dbReference type="InterPro" id="IPR002579">
    <property type="entry name" value="Met_Sox_Rdtase_MsrB_dom"/>
</dbReference>
<dbReference type="InterPro" id="IPR011057">
    <property type="entry name" value="Mss4-like_sf"/>
</dbReference>
<dbReference type="NCBIfam" id="TIGR00357">
    <property type="entry name" value="peptide-methionine (R)-S-oxide reductase MsrB"/>
    <property type="match status" value="1"/>
</dbReference>
<dbReference type="PANTHER" id="PTHR10173">
    <property type="entry name" value="METHIONINE SULFOXIDE REDUCTASE"/>
    <property type="match status" value="1"/>
</dbReference>
<dbReference type="PANTHER" id="PTHR10173:SF52">
    <property type="entry name" value="METHIONINE-R-SULFOXIDE REDUCTASE B1"/>
    <property type="match status" value="1"/>
</dbReference>
<dbReference type="Pfam" id="PF01641">
    <property type="entry name" value="SelR"/>
    <property type="match status" value="1"/>
</dbReference>
<dbReference type="SUPFAM" id="SSF51316">
    <property type="entry name" value="Mss4-like"/>
    <property type="match status" value="1"/>
</dbReference>
<dbReference type="PROSITE" id="PS51790">
    <property type="entry name" value="MSRB"/>
    <property type="match status" value="1"/>
</dbReference>
<sequence>MAKELNPTENIEKLSDIQRYVTQERGTEAPFTGKLLHNKRDGVYQCLCCHQPLFISESKFDSGCGWPSFYQPIDADSIRYIDDYSHNMHRIEIRCGNCDAHLGHVFPDGPQPTGERYCINSASLNFVDDQNGEQTAG</sequence>
<protein>
    <recommendedName>
        <fullName evidence="1">Peptide methionine sulfoxide reductase MsrB</fullName>
        <ecNumber evidence="1">1.8.4.12</ecNumber>
    </recommendedName>
    <alternativeName>
        <fullName evidence="1">Peptide-methionine (R)-S-oxide reductase</fullName>
    </alternativeName>
</protein>
<gene>
    <name evidence="1" type="primary">msrB</name>
    <name type="ordered locus">YPTS_2147</name>
</gene>
<evidence type="ECO:0000255" key="1">
    <source>
        <dbReference type="HAMAP-Rule" id="MF_01400"/>
    </source>
</evidence>
<evidence type="ECO:0000255" key="2">
    <source>
        <dbReference type="PROSITE-ProRule" id="PRU01126"/>
    </source>
</evidence>
<accession>B2K3R4</accession>
<reference key="1">
    <citation type="submission" date="2008-04" db="EMBL/GenBank/DDBJ databases">
        <title>Complete sequence of Yersinia pseudotuberculosis PB1/+.</title>
        <authorList>
            <person name="Copeland A."/>
            <person name="Lucas S."/>
            <person name="Lapidus A."/>
            <person name="Glavina del Rio T."/>
            <person name="Dalin E."/>
            <person name="Tice H."/>
            <person name="Bruce D."/>
            <person name="Goodwin L."/>
            <person name="Pitluck S."/>
            <person name="Munk A.C."/>
            <person name="Brettin T."/>
            <person name="Detter J.C."/>
            <person name="Han C."/>
            <person name="Tapia R."/>
            <person name="Schmutz J."/>
            <person name="Larimer F."/>
            <person name="Land M."/>
            <person name="Hauser L."/>
            <person name="Challacombe J.F."/>
            <person name="Green L."/>
            <person name="Lindler L.E."/>
            <person name="Nikolich M.P."/>
            <person name="Richardson P."/>
        </authorList>
    </citation>
    <scope>NUCLEOTIDE SEQUENCE [LARGE SCALE GENOMIC DNA]</scope>
    <source>
        <strain>PB1/+</strain>
    </source>
</reference>
<keyword id="KW-0479">Metal-binding</keyword>
<keyword id="KW-0560">Oxidoreductase</keyword>
<keyword id="KW-0862">Zinc</keyword>
<organism>
    <name type="scientific">Yersinia pseudotuberculosis serotype IB (strain PB1/+)</name>
    <dbReference type="NCBI Taxonomy" id="502801"/>
    <lineage>
        <taxon>Bacteria</taxon>
        <taxon>Pseudomonadati</taxon>
        <taxon>Pseudomonadota</taxon>
        <taxon>Gammaproteobacteria</taxon>
        <taxon>Enterobacterales</taxon>
        <taxon>Yersiniaceae</taxon>
        <taxon>Yersinia</taxon>
    </lineage>
</organism>
<comment type="catalytic activity">
    <reaction evidence="1">
        <text>L-methionyl-[protein] + [thioredoxin]-disulfide + H2O = L-methionyl-(R)-S-oxide-[protein] + [thioredoxin]-dithiol</text>
        <dbReference type="Rhea" id="RHEA:24164"/>
        <dbReference type="Rhea" id="RHEA-COMP:10698"/>
        <dbReference type="Rhea" id="RHEA-COMP:10700"/>
        <dbReference type="Rhea" id="RHEA-COMP:12313"/>
        <dbReference type="Rhea" id="RHEA-COMP:12314"/>
        <dbReference type="ChEBI" id="CHEBI:15377"/>
        <dbReference type="ChEBI" id="CHEBI:16044"/>
        <dbReference type="ChEBI" id="CHEBI:29950"/>
        <dbReference type="ChEBI" id="CHEBI:45764"/>
        <dbReference type="ChEBI" id="CHEBI:50058"/>
        <dbReference type="EC" id="1.8.4.12"/>
    </reaction>
</comment>
<comment type="cofactor">
    <cofactor evidence="1">
        <name>Zn(2+)</name>
        <dbReference type="ChEBI" id="CHEBI:29105"/>
    </cofactor>
    <text evidence="1">Binds 1 zinc ion per subunit. The zinc ion is important for the structural integrity of the protein.</text>
</comment>
<comment type="similarity">
    <text evidence="1">Belongs to the MsrB Met sulfoxide reductase family.</text>
</comment>
<name>MSRB_YERPB</name>